<sequence>MPRSRDEDDELDGDYEALDLEEEEEEDEEEEEERGRGGGGSRRKRGRSNFIDDYAEEDSQEEDDDDEDYGSSRGGKGAASKRKKPSASIFLDREAHQVDDEDEEEEDEAEDDFIVDNGTDLPDERGDRRYERRFLPRDENDEDVEDLERRIQERFSSRHHEEYDEEATEVEQQALLPSVRDPKLWMVKCAIGREREVAVCLMQKFIDRGADLQIRSVVALDHLKNFIYVEADKEAHVKEAIKGMRNIYANQKILLVPIREMTDVLSVESKAIDLSRDTWVRMKIGTYKGDLAKVVDVDNVRQRVTVKLIPRIDLQALASKLDGREVSKKKAFVPPPRFMNIDEARELHIRVERRRDHMTGDYFENIGGMLFKDGFHYKQVSLKSITVQNVTPTFDELEKFNKPSENGEGDFGGLSTLFANRKKGHFMKGDAVIVIKGDLKNLKGWVEKVDEENVLIRSEVKGLPDPLAVNERELCKYFEPGNHVKVVSGTHEGATGMVVKVDQHVLIILSDTTKEHVRVFADHVVESSEVTTGVTKIGDYELHDLVLLDNLSFGVIIRLENEAFQVLKGVPDRPEVALVKLREIKCKLEKKINVQDRYKNVIAVKDDVRVIEGPSKGKQGPVKHIYKGVLFIYDRHHLEHAGFICAKCTSCIVVGGSRSGANRNGGDSLSRYGNFKAPAPVPSSPGRFQRGRGGGYNNSGGRHGGGRGRGDDSLLGTTVKIRLGPFKGYRGPVVEVKGNSVRVELEMKIVTVDRGAISDNVATTPFRDTSRYSMGSETPMHPSRTPLHPYMTPMRDSGATPIHDGMRTPMRDRAWNPYTPMSPPRDNWEDGNPGSWGTSPQYQPGSPPSRAYEAPTPGSGWASTPGGSYSDAGTPRDHGSAYANAPSPYLPSTPGQPMTPSSASYLPGTPGGQPMTPGTGLDVMSPVIGGDAEAWFMPDILVDIHKAGEDTDVGVIRDVSDGTCKVSLGSSGEGDTIMALPSELEIIPPRKSDRVKIVGGQYRGSTGKLIGIDGSDGIVKIDDNLDVKILDLALLAKFVQP</sequence>
<dbReference type="EMBL" id="AL109819">
    <property type="protein sequence ID" value="CAB52557.1"/>
    <property type="status" value="ALT_SEQ"/>
    <property type="molecule type" value="Genomic_DNA"/>
</dbReference>
<dbReference type="EMBL" id="AL161511">
    <property type="protein sequence ID" value="CAB77960.1"/>
    <property type="status" value="ALT_SEQ"/>
    <property type="molecule type" value="Genomic_DNA"/>
</dbReference>
<dbReference type="EMBL" id="CP002687">
    <property type="protein sequence ID" value="AEE82629.1"/>
    <property type="molecule type" value="Genomic_DNA"/>
</dbReference>
<dbReference type="PIR" id="T14189">
    <property type="entry name" value="T14189"/>
</dbReference>
<dbReference type="SMR" id="Q9STN3"/>
<dbReference type="BioGRID" id="11691">
    <property type="interactions" value="2"/>
</dbReference>
<dbReference type="FunCoup" id="Q9STN3">
    <property type="interactions" value="5016"/>
</dbReference>
<dbReference type="IntAct" id="Q9STN3">
    <property type="interactions" value="1"/>
</dbReference>
<dbReference type="MINT" id="Q9STN3"/>
<dbReference type="STRING" id="3702.Q9STN3"/>
<dbReference type="GlyGen" id="Q9STN3">
    <property type="glycosylation" value="7 sites, 1 O-linked glycan (2 sites)"/>
</dbReference>
<dbReference type="iPTMnet" id="Q9STN3"/>
<dbReference type="PaxDb" id="3702-AT4G08350.1"/>
<dbReference type="ProteomicsDB" id="245202"/>
<dbReference type="EnsemblPlants" id="AT4G08350.1">
    <property type="protein sequence ID" value="AT4G08350.1"/>
    <property type="gene ID" value="AT4G08350"/>
</dbReference>
<dbReference type="GeneID" id="826391"/>
<dbReference type="Gramene" id="AT4G08350.1">
    <property type="protein sequence ID" value="AT4G08350.1"/>
    <property type="gene ID" value="AT4G08350"/>
</dbReference>
<dbReference type="KEGG" id="ath:AT4G08350"/>
<dbReference type="Araport" id="AT4G08350"/>
<dbReference type="TAIR" id="AT4G08350">
    <property type="gene designation" value="GTA2"/>
</dbReference>
<dbReference type="eggNOG" id="KOG1999">
    <property type="taxonomic scope" value="Eukaryota"/>
</dbReference>
<dbReference type="HOGENOM" id="CLU_003537_0_1_1"/>
<dbReference type="InParanoid" id="Q9STN3"/>
<dbReference type="OMA" id="YPVGYMN"/>
<dbReference type="OrthoDB" id="28901at2759"/>
<dbReference type="CD-CODE" id="4299E36E">
    <property type="entry name" value="Nucleolus"/>
</dbReference>
<dbReference type="PRO" id="PR:Q9STN3"/>
<dbReference type="Proteomes" id="UP000006548">
    <property type="component" value="Chromosome 4"/>
</dbReference>
<dbReference type="ExpressionAtlas" id="Q9STN3">
    <property type="expression patterns" value="baseline and differential"/>
</dbReference>
<dbReference type="GO" id="GO:0005634">
    <property type="term" value="C:nucleus"/>
    <property type="evidence" value="ECO:0007669"/>
    <property type="project" value="UniProtKB-SubCell"/>
</dbReference>
<dbReference type="GO" id="GO:0005840">
    <property type="term" value="C:ribosome"/>
    <property type="evidence" value="ECO:0007669"/>
    <property type="project" value="InterPro"/>
</dbReference>
<dbReference type="GO" id="GO:0003735">
    <property type="term" value="F:structural constituent of ribosome"/>
    <property type="evidence" value="ECO:0007669"/>
    <property type="project" value="InterPro"/>
</dbReference>
<dbReference type="GO" id="GO:0032784">
    <property type="term" value="P:regulation of DNA-templated transcription elongation"/>
    <property type="evidence" value="ECO:0007669"/>
    <property type="project" value="InterPro"/>
</dbReference>
<dbReference type="GO" id="GO:0006357">
    <property type="term" value="P:regulation of transcription by RNA polymerase II"/>
    <property type="evidence" value="ECO:0007669"/>
    <property type="project" value="InterPro"/>
</dbReference>
<dbReference type="GO" id="GO:0140673">
    <property type="term" value="P:transcription elongation-coupled chromatin remodeling"/>
    <property type="evidence" value="ECO:0007669"/>
    <property type="project" value="InterPro"/>
</dbReference>
<dbReference type="GO" id="GO:0006412">
    <property type="term" value="P:translation"/>
    <property type="evidence" value="ECO:0007669"/>
    <property type="project" value="InterPro"/>
</dbReference>
<dbReference type="CDD" id="cd06081">
    <property type="entry name" value="KOW_Spt5_1"/>
    <property type="match status" value="1"/>
</dbReference>
<dbReference type="CDD" id="cd06082">
    <property type="entry name" value="KOW_Spt5_2"/>
    <property type="match status" value="1"/>
</dbReference>
<dbReference type="CDD" id="cd06083">
    <property type="entry name" value="KOW_Spt5_3"/>
    <property type="match status" value="1"/>
</dbReference>
<dbReference type="CDD" id="cd06084">
    <property type="entry name" value="KOW_Spt5_4"/>
    <property type="match status" value="1"/>
</dbReference>
<dbReference type="CDD" id="cd06085">
    <property type="entry name" value="KOW_Spt5_5"/>
    <property type="match status" value="1"/>
</dbReference>
<dbReference type="CDD" id="cd06086">
    <property type="entry name" value="KOW_Spt5_6"/>
    <property type="match status" value="1"/>
</dbReference>
<dbReference type="CDD" id="cd09888">
    <property type="entry name" value="NGN_Euk"/>
    <property type="match status" value="1"/>
</dbReference>
<dbReference type="FunFam" id="2.30.30.30:FF:000024">
    <property type="entry name" value="Transcription elongation factor SPT5"/>
    <property type="match status" value="1"/>
</dbReference>
<dbReference type="FunFam" id="2.30.30.30:FF:000027">
    <property type="entry name" value="Transcription elongation factor SPT5"/>
    <property type="match status" value="1"/>
</dbReference>
<dbReference type="FunFam" id="2.30.30.30:FF:000028">
    <property type="entry name" value="Transcription elongation factor SPT5"/>
    <property type="match status" value="1"/>
</dbReference>
<dbReference type="FunFam" id="2.30.30.30:FF:000043">
    <property type="entry name" value="Transcription elongation factor SPT5"/>
    <property type="match status" value="1"/>
</dbReference>
<dbReference type="FunFam" id="3.30.70.940:FF:000007">
    <property type="entry name" value="Transcription elongation factor SPT5"/>
    <property type="match status" value="1"/>
</dbReference>
<dbReference type="Gene3D" id="2.30.30.30">
    <property type="match status" value="4"/>
</dbReference>
<dbReference type="Gene3D" id="3.30.70.940">
    <property type="entry name" value="NusG, N-terminal domain"/>
    <property type="match status" value="1"/>
</dbReference>
<dbReference type="InterPro" id="IPR005824">
    <property type="entry name" value="KOW"/>
</dbReference>
<dbReference type="InterPro" id="IPR041973">
    <property type="entry name" value="KOW_Spt5_1"/>
</dbReference>
<dbReference type="InterPro" id="IPR041975">
    <property type="entry name" value="KOW_Spt5_2"/>
</dbReference>
<dbReference type="InterPro" id="IPR041976">
    <property type="entry name" value="KOW_Spt5_3"/>
</dbReference>
<dbReference type="InterPro" id="IPR041977">
    <property type="entry name" value="KOW_Spt5_4"/>
</dbReference>
<dbReference type="InterPro" id="IPR041978">
    <property type="entry name" value="KOW_Spt5_5"/>
</dbReference>
<dbReference type="InterPro" id="IPR041980">
    <property type="entry name" value="KOW_Spt5_6"/>
</dbReference>
<dbReference type="InterPro" id="IPR005100">
    <property type="entry name" value="NGN-domain"/>
</dbReference>
<dbReference type="InterPro" id="IPR006645">
    <property type="entry name" value="NGN-like_dom"/>
</dbReference>
<dbReference type="InterPro" id="IPR036735">
    <property type="entry name" value="NGN_dom_sf"/>
</dbReference>
<dbReference type="InterPro" id="IPR039385">
    <property type="entry name" value="NGN_Euk"/>
</dbReference>
<dbReference type="InterPro" id="IPR014722">
    <property type="entry name" value="Rib_uL2_dom2"/>
</dbReference>
<dbReference type="InterPro" id="IPR005825">
    <property type="entry name" value="Ribosomal_uL24_CS"/>
</dbReference>
<dbReference type="InterPro" id="IPR039659">
    <property type="entry name" value="SPT5"/>
</dbReference>
<dbReference type="InterPro" id="IPR022581">
    <property type="entry name" value="Spt5_N"/>
</dbReference>
<dbReference type="InterPro" id="IPR017071">
    <property type="entry name" value="TF_Spt5_eukaryote"/>
</dbReference>
<dbReference type="InterPro" id="IPR008991">
    <property type="entry name" value="Translation_prot_SH3-like_sf"/>
</dbReference>
<dbReference type="PANTHER" id="PTHR11125">
    <property type="entry name" value="SUPPRESSOR OF TY 5"/>
    <property type="match status" value="1"/>
</dbReference>
<dbReference type="PANTHER" id="PTHR11125:SF7">
    <property type="entry name" value="TRANSCRIPTION ELONGATION FACTOR SPT5"/>
    <property type="match status" value="1"/>
</dbReference>
<dbReference type="Pfam" id="PF00467">
    <property type="entry name" value="KOW"/>
    <property type="match status" value="1"/>
</dbReference>
<dbReference type="Pfam" id="PF23042">
    <property type="entry name" value="KOW1_SPT5"/>
    <property type="match status" value="1"/>
</dbReference>
<dbReference type="Pfam" id="PF23284">
    <property type="entry name" value="KOW2_Spt5"/>
    <property type="match status" value="1"/>
</dbReference>
<dbReference type="Pfam" id="PF23291">
    <property type="entry name" value="KOW4_SPT5"/>
    <property type="match status" value="1"/>
</dbReference>
<dbReference type="Pfam" id="PF23290">
    <property type="entry name" value="KOW5_SPT5"/>
    <property type="match status" value="1"/>
</dbReference>
<dbReference type="Pfam" id="PF23038">
    <property type="entry name" value="KOW6_SPT51-2"/>
    <property type="match status" value="1"/>
</dbReference>
<dbReference type="Pfam" id="PF23287">
    <property type="entry name" value="KOW7_SPT5"/>
    <property type="match status" value="1"/>
</dbReference>
<dbReference type="Pfam" id="PF23037">
    <property type="entry name" value="KOWx_SPT5"/>
    <property type="match status" value="1"/>
</dbReference>
<dbReference type="Pfam" id="PF03439">
    <property type="entry name" value="Spt5-NGN"/>
    <property type="match status" value="1"/>
</dbReference>
<dbReference type="Pfam" id="PF11942">
    <property type="entry name" value="Spt5_N"/>
    <property type="match status" value="1"/>
</dbReference>
<dbReference type="PIRSF" id="PIRSF036945">
    <property type="entry name" value="Spt5"/>
    <property type="match status" value="1"/>
</dbReference>
<dbReference type="SMART" id="SM00739">
    <property type="entry name" value="KOW"/>
    <property type="match status" value="6"/>
</dbReference>
<dbReference type="SMART" id="SM00738">
    <property type="entry name" value="NGN"/>
    <property type="match status" value="1"/>
</dbReference>
<dbReference type="SUPFAM" id="SSF50104">
    <property type="entry name" value="Translation proteins SH3-like domain"/>
    <property type="match status" value="2"/>
</dbReference>
<dbReference type="PROSITE" id="PS01108">
    <property type="entry name" value="RIBOSOMAL_L24"/>
    <property type="match status" value="1"/>
</dbReference>
<comment type="function">
    <text evidence="1">May regulate transcription elongation by RNA polymerase II. May enhance transcriptional pausing at sites proximal to the promoter, which may in turn facilitate the assembly of an elongation competent RNA polymerase II complex (By similarity).</text>
</comment>
<comment type="subcellular location">
    <subcellularLocation>
        <location evidence="1">Nucleus</location>
    </subcellularLocation>
</comment>
<comment type="similarity">
    <text evidence="3">Belongs to the SPT5 family.</text>
</comment>
<comment type="sequence caution" evidence="3">
    <conflict type="erroneous gene model prediction">
        <sequence resource="EMBL-CDS" id="CAB52557"/>
    </conflict>
</comment>
<comment type="sequence caution" evidence="3">
    <conflict type="erroneous gene model prediction">
        <sequence resource="EMBL-CDS" id="CAB77960"/>
    </conflict>
</comment>
<feature type="chain" id="PRO_0000208475" description="Putative transcription elongation factor SPT5 homolog 1">
    <location>
        <begin position="1"/>
        <end position="1041"/>
    </location>
</feature>
<feature type="domain" description="KOW 1">
    <location>
        <begin position="273"/>
        <end position="300"/>
    </location>
</feature>
<feature type="domain" description="KOW 2">
    <location>
        <begin position="425"/>
        <end position="452"/>
    </location>
</feature>
<feature type="domain" description="KOW 3">
    <location>
        <begin position="477"/>
        <end position="504"/>
    </location>
</feature>
<feature type="domain" description="KOW 4">
    <location>
        <begin position="601"/>
        <end position="628"/>
    </location>
</feature>
<feature type="domain" description="KOW 5">
    <location>
        <begin position="712"/>
        <end position="739"/>
    </location>
</feature>
<feature type="domain" description="KOW 6">
    <location>
        <begin position="988"/>
        <end position="1015"/>
    </location>
</feature>
<feature type="region of interest" description="Disordered" evidence="2">
    <location>
        <begin position="1"/>
        <end position="133"/>
    </location>
</feature>
<feature type="region of interest" description="Disordered" evidence="2">
    <location>
        <begin position="662"/>
        <end position="713"/>
    </location>
</feature>
<feature type="region of interest" description="Disordered" evidence="2">
    <location>
        <begin position="768"/>
        <end position="921"/>
    </location>
</feature>
<feature type="compositionally biased region" description="Acidic residues" evidence="2">
    <location>
        <begin position="7"/>
        <end position="32"/>
    </location>
</feature>
<feature type="compositionally biased region" description="Acidic residues" evidence="2">
    <location>
        <begin position="53"/>
        <end position="69"/>
    </location>
</feature>
<feature type="compositionally biased region" description="Acidic residues" evidence="2">
    <location>
        <begin position="99"/>
        <end position="114"/>
    </location>
</feature>
<feature type="compositionally biased region" description="Basic and acidic residues" evidence="2">
    <location>
        <begin position="122"/>
        <end position="133"/>
    </location>
</feature>
<feature type="compositionally biased region" description="Gly residues" evidence="2">
    <location>
        <begin position="691"/>
        <end position="703"/>
    </location>
</feature>
<feature type="compositionally biased region" description="Basic and acidic residues" evidence="2">
    <location>
        <begin position="804"/>
        <end position="814"/>
    </location>
</feature>
<feature type="compositionally biased region" description="Polar residues" evidence="2">
    <location>
        <begin position="835"/>
        <end position="844"/>
    </location>
</feature>
<feature type="compositionally biased region" description="Polar residues" evidence="2">
    <location>
        <begin position="893"/>
        <end position="904"/>
    </location>
</feature>
<feature type="modified residue" description="Phosphoserine" evidence="4">
    <location>
        <position position="59"/>
    </location>
</feature>
<organism>
    <name type="scientific">Arabidopsis thaliana</name>
    <name type="common">Mouse-ear cress</name>
    <dbReference type="NCBI Taxonomy" id="3702"/>
    <lineage>
        <taxon>Eukaryota</taxon>
        <taxon>Viridiplantae</taxon>
        <taxon>Streptophyta</taxon>
        <taxon>Embryophyta</taxon>
        <taxon>Tracheophyta</taxon>
        <taxon>Spermatophyta</taxon>
        <taxon>Magnoliopsida</taxon>
        <taxon>eudicotyledons</taxon>
        <taxon>Gunneridae</taxon>
        <taxon>Pentapetalae</taxon>
        <taxon>rosids</taxon>
        <taxon>malvids</taxon>
        <taxon>Brassicales</taxon>
        <taxon>Brassicaceae</taxon>
        <taxon>Camelineae</taxon>
        <taxon>Arabidopsis</taxon>
    </lineage>
</organism>
<accession>Q9STN3</accession>
<accession>F4JFX7</accession>
<proteinExistence type="evidence at protein level"/>
<protein>
    <recommendedName>
        <fullName>Putative transcription elongation factor SPT5 homolog 1</fullName>
    </recommendedName>
</protein>
<name>SPT51_ARATH</name>
<keyword id="KW-0010">Activator</keyword>
<keyword id="KW-0539">Nucleus</keyword>
<keyword id="KW-0597">Phosphoprotein</keyword>
<keyword id="KW-1185">Reference proteome</keyword>
<keyword id="KW-0677">Repeat</keyword>
<keyword id="KW-0678">Repressor</keyword>
<keyword id="KW-0804">Transcription</keyword>
<keyword id="KW-0805">Transcription regulation</keyword>
<gene>
    <name type="ordered locus">At4g08350</name>
    <name type="ORF">T28D5.40</name>
</gene>
<evidence type="ECO:0000250" key="1"/>
<evidence type="ECO:0000256" key="2">
    <source>
        <dbReference type="SAM" id="MobiDB-lite"/>
    </source>
</evidence>
<evidence type="ECO:0000305" key="3"/>
<evidence type="ECO:0007744" key="4">
    <source>
    </source>
</evidence>
<reference key="1">
    <citation type="journal article" date="1999" name="Nature">
        <title>Sequence and analysis of chromosome 4 of the plant Arabidopsis thaliana.</title>
        <authorList>
            <person name="Mayer K.F.X."/>
            <person name="Schueller C."/>
            <person name="Wambutt R."/>
            <person name="Murphy G."/>
            <person name="Volckaert G."/>
            <person name="Pohl T."/>
            <person name="Duesterhoeft A."/>
            <person name="Stiekema W."/>
            <person name="Entian K.-D."/>
            <person name="Terryn N."/>
            <person name="Harris B."/>
            <person name="Ansorge W."/>
            <person name="Brandt P."/>
            <person name="Grivell L.A."/>
            <person name="Rieger M."/>
            <person name="Weichselgartner M."/>
            <person name="de Simone V."/>
            <person name="Obermaier B."/>
            <person name="Mache R."/>
            <person name="Mueller M."/>
            <person name="Kreis M."/>
            <person name="Delseny M."/>
            <person name="Puigdomenech P."/>
            <person name="Watson M."/>
            <person name="Schmidtheini T."/>
            <person name="Reichert B."/>
            <person name="Portetelle D."/>
            <person name="Perez-Alonso M."/>
            <person name="Boutry M."/>
            <person name="Bancroft I."/>
            <person name="Vos P."/>
            <person name="Hoheisel J."/>
            <person name="Zimmermann W."/>
            <person name="Wedler H."/>
            <person name="Ridley P."/>
            <person name="Langham S.-A."/>
            <person name="McCullagh B."/>
            <person name="Bilham L."/>
            <person name="Robben J."/>
            <person name="van der Schueren J."/>
            <person name="Grymonprez B."/>
            <person name="Chuang Y.-J."/>
            <person name="Vandenbussche F."/>
            <person name="Braeken M."/>
            <person name="Weltjens I."/>
            <person name="Voet M."/>
            <person name="Bastiaens I."/>
            <person name="Aert R."/>
            <person name="Defoor E."/>
            <person name="Weitzenegger T."/>
            <person name="Bothe G."/>
            <person name="Ramsperger U."/>
            <person name="Hilbert H."/>
            <person name="Braun M."/>
            <person name="Holzer E."/>
            <person name="Brandt A."/>
            <person name="Peters S."/>
            <person name="van Staveren M."/>
            <person name="Dirkse W."/>
            <person name="Mooijman P."/>
            <person name="Klein Lankhorst R."/>
            <person name="Rose M."/>
            <person name="Hauf J."/>
            <person name="Koetter P."/>
            <person name="Berneiser S."/>
            <person name="Hempel S."/>
            <person name="Feldpausch M."/>
            <person name="Lamberth S."/>
            <person name="Van den Daele H."/>
            <person name="De Keyser A."/>
            <person name="Buysshaert C."/>
            <person name="Gielen J."/>
            <person name="Villarroel R."/>
            <person name="De Clercq R."/>
            <person name="van Montagu M."/>
            <person name="Rogers J."/>
            <person name="Cronin A."/>
            <person name="Quail M.A."/>
            <person name="Bray-Allen S."/>
            <person name="Clark L."/>
            <person name="Doggett J."/>
            <person name="Hall S."/>
            <person name="Kay M."/>
            <person name="Lennard N."/>
            <person name="McLay K."/>
            <person name="Mayes R."/>
            <person name="Pettett A."/>
            <person name="Rajandream M.A."/>
            <person name="Lyne M."/>
            <person name="Benes V."/>
            <person name="Rechmann S."/>
            <person name="Borkova D."/>
            <person name="Bloecker H."/>
            <person name="Scharfe M."/>
            <person name="Grimm M."/>
            <person name="Loehnert T.-H."/>
            <person name="Dose S."/>
            <person name="de Haan M."/>
            <person name="Maarse A.C."/>
            <person name="Schaefer M."/>
            <person name="Mueller-Auer S."/>
            <person name="Gabel C."/>
            <person name="Fuchs M."/>
            <person name="Fartmann B."/>
            <person name="Granderath K."/>
            <person name="Dauner D."/>
            <person name="Herzl A."/>
            <person name="Neumann S."/>
            <person name="Argiriou A."/>
            <person name="Vitale D."/>
            <person name="Liguori R."/>
            <person name="Piravandi E."/>
            <person name="Massenet O."/>
            <person name="Quigley F."/>
            <person name="Clabauld G."/>
            <person name="Muendlein A."/>
            <person name="Felber R."/>
            <person name="Schnabl S."/>
            <person name="Hiller R."/>
            <person name="Schmidt W."/>
            <person name="Lecharny A."/>
            <person name="Aubourg S."/>
            <person name="Chefdor F."/>
            <person name="Cooke R."/>
            <person name="Berger C."/>
            <person name="Monfort A."/>
            <person name="Casacuberta E."/>
            <person name="Gibbons T."/>
            <person name="Weber N."/>
            <person name="Vandenbol M."/>
            <person name="Bargues M."/>
            <person name="Terol J."/>
            <person name="Torres A."/>
            <person name="Perez-Perez A."/>
            <person name="Purnelle B."/>
            <person name="Bent E."/>
            <person name="Johnson S."/>
            <person name="Tacon D."/>
            <person name="Jesse T."/>
            <person name="Heijnen L."/>
            <person name="Schwarz S."/>
            <person name="Scholler P."/>
            <person name="Heber S."/>
            <person name="Francs P."/>
            <person name="Bielke C."/>
            <person name="Frishman D."/>
            <person name="Haase D."/>
            <person name="Lemcke K."/>
            <person name="Mewes H.-W."/>
            <person name="Stocker S."/>
            <person name="Zaccaria P."/>
            <person name="Bevan M."/>
            <person name="Wilson R.K."/>
            <person name="de la Bastide M."/>
            <person name="Habermann K."/>
            <person name="Parnell L."/>
            <person name="Dedhia N."/>
            <person name="Gnoj L."/>
            <person name="Schutz K."/>
            <person name="Huang E."/>
            <person name="Spiegel L."/>
            <person name="Sekhon M."/>
            <person name="Murray J."/>
            <person name="Sheet P."/>
            <person name="Cordes M."/>
            <person name="Abu-Threideh J."/>
            <person name="Stoneking T."/>
            <person name="Kalicki J."/>
            <person name="Graves T."/>
            <person name="Harmon G."/>
            <person name="Edwards J."/>
            <person name="Latreille P."/>
            <person name="Courtney L."/>
            <person name="Cloud J."/>
            <person name="Abbott A."/>
            <person name="Scott K."/>
            <person name="Johnson D."/>
            <person name="Minx P."/>
            <person name="Bentley D."/>
            <person name="Fulton B."/>
            <person name="Miller N."/>
            <person name="Greco T."/>
            <person name="Kemp K."/>
            <person name="Kramer J."/>
            <person name="Fulton L."/>
            <person name="Mardis E."/>
            <person name="Dante M."/>
            <person name="Pepin K."/>
            <person name="Hillier L.W."/>
            <person name="Nelson J."/>
            <person name="Spieth J."/>
            <person name="Ryan E."/>
            <person name="Andrews S."/>
            <person name="Geisel C."/>
            <person name="Layman D."/>
            <person name="Du H."/>
            <person name="Ali J."/>
            <person name="Berghoff A."/>
            <person name="Jones K."/>
            <person name="Drone K."/>
            <person name="Cotton M."/>
            <person name="Joshu C."/>
            <person name="Antonoiu B."/>
            <person name="Zidanic M."/>
            <person name="Strong C."/>
            <person name="Sun H."/>
            <person name="Lamar B."/>
            <person name="Yordan C."/>
            <person name="Ma P."/>
            <person name="Zhong J."/>
            <person name="Preston R."/>
            <person name="Vil D."/>
            <person name="Shekher M."/>
            <person name="Matero A."/>
            <person name="Shah R."/>
            <person name="Swaby I.K."/>
            <person name="O'Shaughnessy A."/>
            <person name="Rodriguez M."/>
            <person name="Hoffman J."/>
            <person name="Till S."/>
            <person name="Granat S."/>
            <person name="Shohdy N."/>
            <person name="Hasegawa A."/>
            <person name="Hameed A."/>
            <person name="Lodhi M."/>
            <person name="Johnson A."/>
            <person name="Chen E."/>
            <person name="Marra M.A."/>
            <person name="Martienssen R."/>
            <person name="McCombie W.R."/>
        </authorList>
    </citation>
    <scope>NUCLEOTIDE SEQUENCE [LARGE SCALE GENOMIC DNA]</scope>
    <source>
        <strain>cv. Columbia</strain>
    </source>
</reference>
<reference key="2">
    <citation type="journal article" date="2017" name="Plant J.">
        <title>Araport11: a complete reannotation of the Arabidopsis thaliana reference genome.</title>
        <authorList>
            <person name="Cheng C.Y."/>
            <person name="Krishnakumar V."/>
            <person name="Chan A.P."/>
            <person name="Thibaud-Nissen F."/>
            <person name="Schobel S."/>
            <person name="Town C.D."/>
        </authorList>
    </citation>
    <scope>GENOME REANNOTATION</scope>
    <source>
        <strain>cv. Columbia</strain>
    </source>
</reference>
<reference key="3">
    <citation type="journal article" date="2009" name="J. Proteomics">
        <title>Phosphoproteomic analysis of nuclei-enriched fractions from Arabidopsis thaliana.</title>
        <authorList>
            <person name="Jones A.M.E."/>
            <person name="MacLean D."/>
            <person name="Studholme D.J."/>
            <person name="Serna-Sanz A."/>
            <person name="Andreasson E."/>
            <person name="Rathjen J.P."/>
            <person name="Peck S.C."/>
        </authorList>
    </citation>
    <scope>PHOSPHORYLATION [LARGE SCALE ANALYSIS] AT SER-59</scope>
    <scope>IDENTIFICATION BY MASS SPECTROMETRY [LARGE SCALE ANALYSIS]</scope>
    <source>
        <strain>cv. Columbia</strain>
    </source>
</reference>